<feature type="chain" id="PRO_1000006477" description="tRNA (guanine-N(1)-)-methyltransferase">
    <location>
        <begin position="1"/>
        <end position="252"/>
    </location>
</feature>
<feature type="binding site" evidence="1">
    <location>
        <position position="113"/>
    </location>
    <ligand>
        <name>S-adenosyl-L-methionine</name>
        <dbReference type="ChEBI" id="CHEBI:59789"/>
    </ligand>
</feature>
<feature type="binding site" evidence="1">
    <location>
        <begin position="133"/>
        <end position="138"/>
    </location>
    <ligand>
        <name>S-adenosyl-L-methionine</name>
        <dbReference type="ChEBI" id="CHEBI:59789"/>
    </ligand>
</feature>
<accession>A7NEB1</accession>
<evidence type="ECO:0000255" key="1">
    <source>
        <dbReference type="HAMAP-Rule" id="MF_00605"/>
    </source>
</evidence>
<evidence type="ECO:0000305" key="2"/>
<dbReference type="EC" id="2.1.1.228" evidence="1"/>
<dbReference type="EMBL" id="CP000803">
    <property type="protein sequence ID" value="ABU62314.2"/>
    <property type="status" value="ALT_INIT"/>
    <property type="molecule type" value="Genomic_DNA"/>
</dbReference>
<dbReference type="RefSeq" id="WP_003024826.1">
    <property type="nucleotide sequence ID" value="NC_009749.1"/>
</dbReference>
<dbReference type="SMR" id="A7NEB1"/>
<dbReference type="KEGG" id="fta:FTA_1839"/>
<dbReference type="HOGENOM" id="CLU_047363_0_1_6"/>
<dbReference type="GO" id="GO:0005829">
    <property type="term" value="C:cytosol"/>
    <property type="evidence" value="ECO:0007669"/>
    <property type="project" value="TreeGrafter"/>
</dbReference>
<dbReference type="GO" id="GO:0052906">
    <property type="term" value="F:tRNA (guanine(37)-N1)-methyltransferase activity"/>
    <property type="evidence" value="ECO:0007669"/>
    <property type="project" value="UniProtKB-UniRule"/>
</dbReference>
<dbReference type="GO" id="GO:0002939">
    <property type="term" value="P:tRNA N1-guanine methylation"/>
    <property type="evidence" value="ECO:0007669"/>
    <property type="project" value="TreeGrafter"/>
</dbReference>
<dbReference type="CDD" id="cd18080">
    <property type="entry name" value="TrmD-like"/>
    <property type="match status" value="1"/>
</dbReference>
<dbReference type="FunFam" id="1.10.1270.20:FF:000001">
    <property type="entry name" value="tRNA (guanine-N(1)-)-methyltransferase"/>
    <property type="match status" value="1"/>
</dbReference>
<dbReference type="FunFam" id="3.40.1280.10:FF:000001">
    <property type="entry name" value="tRNA (guanine-N(1)-)-methyltransferase"/>
    <property type="match status" value="1"/>
</dbReference>
<dbReference type="Gene3D" id="3.40.1280.10">
    <property type="match status" value="1"/>
</dbReference>
<dbReference type="Gene3D" id="1.10.1270.20">
    <property type="entry name" value="tRNA(m1g37)methyltransferase, domain 2"/>
    <property type="match status" value="1"/>
</dbReference>
<dbReference type="HAMAP" id="MF_00605">
    <property type="entry name" value="TrmD"/>
    <property type="match status" value="1"/>
</dbReference>
<dbReference type="InterPro" id="IPR029028">
    <property type="entry name" value="Alpha/beta_knot_MTases"/>
</dbReference>
<dbReference type="InterPro" id="IPR023148">
    <property type="entry name" value="tRNA_m1G_MeTrfase_C_sf"/>
</dbReference>
<dbReference type="InterPro" id="IPR002649">
    <property type="entry name" value="tRNA_m1G_MeTrfase_TrmD"/>
</dbReference>
<dbReference type="InterPro" id="IPR029026">
    <property type="entry name" value="tRNA_m1G_MTases_N"/>
</dbReference>
<dbReference type="InterPro" id="IPR016009">
    <property type="entry name" value="tRNA_MeTrfase_TRMD/TRM10"/>
</dbReference>
<dbReference type="NCBIfam" id="NF000648">
    <property type="entry name" value="PRK00026.1"/>
    <property type="match status" value="1"/>
</dbReference>
<dbReference type="NCBIfam" id="TIGR00088">
    <property type="entry name" value="trmD"/>
    <property type="match status" value="1"/>
</dbReference>
<dbReference type="PANTHER" id="PTHR46417">
    <property type="entry name" value="TRNA (GUANINE-N(1)-)-METHYLTRANSFERASE"/>
    <property type="match status" value="1"/>
</dbReference>
<dbReference type="PANTHER" id="PTHR46417:SF1">
    <property type="entry name" value="TRNA (GUANINE-N(1)-)-METHYLTRANSFERASE"/>
    <property type="match status" value="1"/>
</dbReference>
<dbReference type="Pfam" id="PF01746">
    <property type="entry name" value="tRNA_m1G_MT"/>
    <property type="match status" value="1"/>
</dbReference>
<dbReference type="PIRSF" id="PIRSF000386">
    <property type="entry name" value="tRNA_mtase"/>
    <property type="match status" value="1"/>
</dbReference>
<dbReference type="SUPFAM" id="SSF75217">
    <property type="entry name" value="alpha/beta knot"/>
    <property type="match status" value="1"/>
</dbReference>
<protein>
    <recommendedName>
        <fullName evidence="1">tRNA (guanine-N(1)-)-methyltransferase</fullName>
        <ecNumber evidence="1">2.1.1.228</ecNumber>
    </recommendedName>
    <alternativeName>
        <fullName evidence="1">M1G-methyltransferase</fullName>
    </alternativeName>
    <alternativeName>
        <fullName evidence="1">tRNA [GM37] methyltransferase</fullName>
    </alternativeName>
</protein>
<keyword id="KW-0963">Cytoplasm</keyword>
<keyword id="KW-0489">Methyltransferase</keyword>
<keyword id="KW-0949">S-adenosyl-L-methionine</keyword>
<keyword id="KW-0808">Transferase</keyword>
<keyword id="KW-0819">tRNA processing</keyword>
<reference key="1">
    <citation type="journal article" date="2009" name="PLoS ONE">
        <title>Complete genome sequence of Francisella tularensis subspecies holarctica FTNF002-00.</title>
        <authorList>
            <person name="Barabote R.D."/>
            <person name="Xie G."/>
            <person name="Brettin T.S."/>
            <person name="Hinrichs S.H."/>
            <person name="Fey P.D."/>
            <person name="Jay J.J."/>
            <person name="Engle J.L."/>
            <person name="Godbole S.D."/>
            <person name="Noronha J.M."/>
            <person name="Scheuermann R.H."/>
            <person name="Zhou L.W."/>
            <person name="Lion C."/>
            <person name="Dempsey M.P."/>
        </authorList>
    </citation>
    <scope>NUCLEOTIDE SEQUENCE [LARGE SCALE GENOMIC DNA]</scope>
    <source>
        <strain>FTNF002-00 / FTA</strain>
    </source>
</reference>
<gene>
    <name evidence="1" type="primary">trmD</name>
    <name type="ordered locus">FTA_1839</name>
</gene>
<proteinExistence type="inferred from homology"/>
<name>TRMD_FRATF</name>
<organism>
    <name type="scientific">Francisella tularensis subsp. holarctica (strain FTNF002-00 / FTA)</name>
    <dbReference type="NCBI Taxonomy" id="458234"/>
    <lineage>
        <taxon>Bacteria</taxon>
        <taxon>Pseudomonadati</taxon>
        <taxon>Pseudomonadota</taxon>
        <taxon>Gammaproteobacteria</taxon>
        <taxon>Thiotrichales</taxon>
        <taxon>Francisellaceae</taxon>
        <taxon>Francisella</taxon>
    </lineage>
</organism>
<sequence length="252" mass="28163">MKFGIISIFPEMFKAINDFGVTARAIKDSKVSISCFNPRDYTTDRHATVDDTSFGGGAGMVMKYQPLSAAIEDAKNTLGCGTKVVYLSPQGSIFNHRKAQELLQNDSLILLCGRYEGVDERLIQDYVDEEISVGDFVLSGGELPAMLVMDSLIRLLPEVLGNKESVVEDSFYDGLLDYPHYTKPAVLPNGNAVPDVLLSGNHKEIAKWRRKQKLIRTYERRKDLIECLCLSAKDKQILDDYKIDKVSTKGEE</sequence>
<comment type="function">
    <text evidence="1">Specifically methylates guanosine-37 in various tRNAs.</text>
</comment>
<comment type="catalytic activity">
    <reaction evidence="1">
        <text>guanosine(37) in tRNA + S-adenosyl-L-methionine = N(1)-methylguanosine(37) in tRNA + S-adenosyl-L-homocysteine + H(+)</text>
        <dbReference type="Rhea" id="RHEA:36899"/>
        <dbReference type="Rhea" id="RHEA-COMP:10145"/>
        <dbReference type="Rhea" id="RHEA-COMP:10147"/>
        <dbReference type="ChEBI" id="CHEBI:15378"/>
        <dbReference type="ChEBI" id="CHEBI:57856"/>
        <dbReference type="ChEBI" id="CHEBI:59789"/>
        <dbReference type="ChEBI" id="CHEBI:73542"/>
        <dbReference type="ChEBI" id="CHEBI:74269"/>
        <dbReference type="EC" id="2.1.1.228"/>
    </reaction>
</comment>
<comment type="subunit">
    <text evidence="1">Homodimer.</text>
</comment>
<comment type="subcellular location">
    <subcellularLocation>
        <location evidence="1">Cytoplasm</location>
    </subcellularLocation>
</comment>
<comment type="similarity">
    <text evidence="1">Belongs to the RNA methyltransferase TrmD family.</text>
</comment>
<comment type="sequence caution" evidence="2">
    <conflict type="erroneous initiation">
        <sequence resource="EMBL-CDS" id="ABU62314"/>
    </conflict>
</comment>